<gene>
    <name type="primary">Kcna2</name>
</gene>
<evidence type="ECO:0000250" key="1"/>
<evidence type="ECO:0000250" key="2">
    <source>
        <dbReference type="UniProtKB" id="P16389"/>
    </source>
</evidence>
<evidence type="ECO:0000250" key="3">
    <source>
        <dbReference type="UniProtKB" id="P63142"/>
    </source>
</evidence>
<evidence type="ECO:0000250" key="4">
    <source>
        <dbReference type="UniProtKB" id="Q09081"/>
    </source>
</evidence>
<evidence type="ECO:0000255" key="5"/>
<evidence type="ECO:0000256" key="6">
    <source>
        <dbReference type="SAM" id="MobiDB-lite"/>
    </source>
</evidence>
<evidence type="ECO:0000269" key="7">
    <source>
    </source>
</evidence>
<evidence type="ECO:0000269" key="8">
    <source>
    </source>
</evidence>
<evidence type="ECO:0000269" key="9">
    <source>
    </source>
</evidence>
<evidence type="ECO:0000269" key="10">
    <source>
    </source>
</evidence>
<evidence type="ECO:0000269" key="11">
    <source>
    </source>
</evidence>
<evidence type="ECO:0000269" key="12">
    <source>
    </source>
</evidence>
<evidence type="ECO:0000269" key="13">
    <source>
    </source>
</evidence>
<evidence type="ECO:0000269" key="14">
    <source>
    </source>
</evidence>
<evidence type="ECO:0000269" key="15">
    <source>
    </source>
</evidence>
<evidence type="ECO:0000269" key="16">
    <source>
    </source>
</evidence>
<evidence type="ECO:0000269" key="17">
    <source>
    </source>
</evidence>
<evidence type="ECO:0000269" key="18">
    <source>
    </source>
</evidence>
<evidence type="ECO:0000269" key="19">
    <source>
    </source>
</evidence>
<evidence type="ECO:0000269" key="20">
    <source>
    </source>
</evidence>
<evidence type="ECO:0000269" key="21">
    <source>
    </source>
</evidence>
<evidence type="ECO:0000269" key="22">
    <source>
    </source>
</evidence>
<evidence type="ECO:0000269" key="23">
    <source>
    </source>
</evidence>
<evidence type="ECO:0000303" key="24">
    <source>
    </source>
</evidence>
<evidence type="ECO:0000305" key="25"/>
<evidence type="ECO:0000305" key="26">
    <source>
    </source>
</evidence>
<evidence type="ECO:0000305" key="27">
    <source>
    </source>
</evidence>
<evidence type="ECO:0000312" key="28">
    <source>
        <dbReference type="EMBL" id="AAI38651.1"/>
    </source>
</evidence>
<evidence type="ECO:0007744" key="29">
    <source>
    </source>
</evidence>
<evidence type="ECO:0007744" key="30">
    <source>
    </source>
</evidence>
<evidence type="ECO:0007829" key="31">
    <source>
        <dbReference type="PDB" id="5WIE"/>
    </source>
</evidence>
<reference key="1">
    <citation type="journal article" date="1990" name="Science">
        <title>A family of three mouse potassium channel genes with intronless coding regions.</title>
        <authorList>
            <person name="Chandy K.G."/>
            <person name="Williams C.B."/>
            <person name="Spencer R.H."/>
            <person name="Aguilar B.A."/>
            <person name="Ghanshani S."/>
            <person name="Tempel B.L."/>
            <person name="Gutman G.A."/>
        </authorList>
    </citation>
    <scope>NUCLEOTIDE SEQUENCE [GENOMIC DNA]</scope>
</reference>
<reference key="2">
    <citation type="journal article" date="2005" name="Science">
        <title>The transcriptional landscape of the mammalian genome.</title>
        <authorList>
            <person name="Carninci P."/>
            <person name="Kasukawa T."/>
            <person name="Katayama S."/>
            <person name="Gough J."/>
            <person name="Frith M.C."/>
            <person name="Maeda N."/>
            <person name="Oyama R."/>
            <person name="Ravasi T."/>
            <person name="Lenhard B."/>
            <person name="Wells C."/>
            <person name="Kodzius R."/>
            <person name="Shimokawa K."/>
            <person name="Bajic V.B."/>
            <person name="Brenner S.E."/>
            <person name="Batalov S."/>
            <person name="Forrest A.R."/>
            <person name="Zavolan M."/>
            <person name="Davis M.J."/>
            <person name="Wilming L.G."/>
            <person name="Aidinis V."/>
            <person name="Allen J.E."/>
            <person name="Ambesi-Impiombato A."/>
            <person name="Apweiler R."/>
            <person name="Aturaliya R.N."/>
            <person name="Bailey T.L."/>
            <person name="Bansal M."/>
            <person name="Baxter L."/>
            <person name="Beisel K.W."/>
            <person name="Bersano T."/>
            <person name="Bono H."/>
            <person name="Chalk A.M."/>
            <person name="Chiu K.P."/>
            <person name="Choudhary V."/>
            <person name="Christoffels A."/>
            <person name="Clutterbuck D.R."/>
            <person name="Crowe M.L."/>
            <person name="Dalla E."/>
            <person name="Dalrymple B.P."/>
            <person name="de Bono B."/>
            <person name="Della Gatta G."/>
            <person name="di Bernardo D."/>
            <person name="Down T."/>
            <person name="Engstrom P."/>
            <person name="Fagiolini M."/>
            <person name="Faulkner G."/>
            <person name="Fletcher C.F."/>
            <person name="Fukushima T."/>
            <person name="Furuno M."/>
            <person name="Futaki S."/>
            <person name="Gariboldi M."/>
            <person name="Georgii-Hemming P."/>
            <person name="Gingeras T.R."/>
            <person name="Gojobori T."/>
            <person name="Green R.E."/>
            <person name="Gustincich S."/>
            <person name="Harbers M."/>
            <person name="Hayashi Y."/>
            <person name="Hensch T.K."/>
            <person name="Hirokawa N."/>
            <person name="Hill D."/>
            <person name="Huminiecki L."/>
            <person name="Iacono M."/>
            <person name="Ikeo K."/>
            <person name="Iwama A."/>
            <person name="Ishikawa T."/>
            <person name="Jakt M."/>
            <person name="Kanapin A."/>
            <person name="Katoh M."/>
            <person name="Kawasawa Y."/>
            <person name="Kelso J."/>
            <person name="Kitamura H."/>
            <person name="Kitano H."/>
            <person name="Kollias G."/>
            <person name="Krishnan S.P."/>
            <person name="Kruger A."/>
            <person name="Kummerfeld S.K."/>
            <person name="Kurochkin I.V."/>
            <person name="Lareau L.F."/>
            <person name="Lazarevic D."/>
            <person name="Lipovich L."/>
            <person name="Liu J."/>
            <person name="Liuni S."/>
            <person name="McWilliam S."/>
            <person name="Madan Babu M."/>
            <person name="Madera M."/>
            <person name="Marchionni L."/>
            <person name="Matsuda H."/>
            <person name="Matsuzawa S."/>
            <person name="Miki H."/>
            <person name="Mignone F."/>
            <person name="Miyake S."/>
            <person name="Morris K."/>
            <person name="Mottagui-Tabar S."/>
            <person name="Mulder N."/>
            <person name="Nakano N."/>
            <person name="Nakauchi H."/>
            <person name="Ng P."/>
            <person name="Nilsson R."/>
            <person name="Nishiguchi S."/>
            <person name="Nishikawa S."/>
            <person name="Nori F."/>
            <person name="Ohara O."/>
            <person name="Okazaki Y."/>
            <person name="Orlando V."/>
            <person name="Pang K.C."/>
            <person name="Pavan W.J."/>
            <person name="Pavesi G."/>
            <person name="Pesole G."/>
            <person name="Petrovsky N."/>
            <person name="Piazza S."/>
            <person name="Reed J."/>
            <person name="Reid J.F."/>
            <person name="Ring B.Z."/>
            <person name="Ringwald M."/>
            <person name="Rost B."/>
            <person name="Ruan Y."/>
            <person name="Salzberg S.L."/>
            <person name="Sandelin A."/>
            <person name="Schneider C."/>
            <person name="Schoenbach C."/>
            <person name="Sekiguchi K."/>
            <person name="Semple C.A."/>
            <person name="Seno S."/>
            <person name="Sessa L."/>
            <person name="Sheng Y."/>
            <person name="Shibata Y."/>
            <person name="Shimada H."/>
            <person name="Shimada K."/>
            <person name="Silva D."/>
            <person name="Sinclair B."/>
            <person name="Sperling S."/>
            <person name="Stupka E."/>
            <person name="Sugiura K."/>
            <person name="Sultana R."/>
            <person name="Takenaka Y."/>
            <person name="Taki K."/>
            <person name="Tammoja K."/>
            <person name="Tan S.L."/>
            <person name="Tang S."/>
            <person name="Taylor M.S."/>
            <person name="Tegner J."/>
            <person name="Teichmann S.A."/>
            <person name="Ueda H.R."/>
            <person name="van Nimwegen E."/>
            <person name="Verardo R."/>
            <person name="Wei C.L."/>
            <person name="Yagi K."/>
            <person name="Yamanishi H."/>
            <person name="Zabarovsky E."/>
            <person name="Zhu S."/>
            <person name="Zimmer A."/>
            <person name="Hide W."/>
            <person name="Bult C."/>
            <person name="Grimmond S.M."/>
            <person name="Teasdale R.D."/>
            <person name="Liu E.T."/>
            <person name="Brusic V."/>
            <person name="Quackenbush J."/>
            <person name="Wahlestedt C."/>
            <person name="Mattick J.S."/>
            <person name="Hume D.A."/>
            <person name="Kai C."/>
            <person name="Sasaki D."/>
            <person name="Tomaru Y."/>
            <person name="Fukuda S."/>
            <person name="Kanamori-Katayama M."/>
            <person name="Suzuki M."/>
            <person name="Aoki J."/>
            <person name="Arakawa T."/>
            <person name="Iida J."/>
            <person name="Imamura K."/>
            <person name="Itoh M."/>
            <person name="Kato T."/>
            <person name="Kawaji H."/>
            <person name="Kawagashira N."/>
            <person name="Kawashima T."/>
            <person name="Kojima M."/>
            <person name="Kondo S."/>
            <person name="Konno H."/>
            <person name="Nakano K."/>
            <person name="Ninomiya N."/>
            <person name="Nishio T."/>
            <person name="Okada M."/>
            <person name="Plessy C."/>
            <person name="Shibata K."/>
            <person name="Shiraki T."/>
            <person name="Suzuki S."/>
            <person name="Tagami M."/>
            <person name="Waki K."/>
            <person name="Watahiki A."/>
            <person name="Okamura-Oho Y."/>
            <person name="Suzuki H."/>
            <person name="Kawai J."/>
            <person name="Hayashizaki Y."/>
        </authorList>
    </citation>
    <scope>NUCLEOTIDE SEQUENCE [LARGE SCALE MRNA]</scope>
    <source>
        <strain>C57BL/6J</strain>
        <tissue>Retina</tissue>
    </source>
</reference>
<reference key="3">
    <citation type="submission" date="2005-07" db="EMBL/GenBank/DDBJ databases">
        <authorList>
            <person name="Mural R.J."/>
            <person name="Adams M.D."/>
            <person name="Myers E.W."/>
            <person name="Smith H.O."/>
            <person name="Venter J.C."/>
        </authorList>
    </citation>
    <scope>NUCLEOTIDE SEQUENCE [LARGE SCALE GENOMIC DNA]</scope>
</reference>
<reference key="4">
    <citation type="journal article" date="2004" name="Genome Res.">
        <title>The status, quality, and expansion of the NIH full-length cDNA project: the Mammalian Gene Collection (MGC).</title>
        <authorList>
            <consortium name="The MGC Project Team"/>
        </authorList>
    </citation>
    <scope>NUCLEOTIDE SEQUENCE [LARGE SCALE MRNA]</scope>
    <source>
        <tissue evidence="28">Brain</tissue>
    </source>
</reference>
<reference key="5">
    <citation type="journal article" date="1990" name="FEBS Lett.">
        <title>Expression of voltage-gated K+ channels in insulin-producing cells. Analysis by polymerase chain reaction.</title>
        <authorList>
            <person name="Betsholtz C."/>
            <person name="Baumann A."/>
            <person name="Kenna S."/>
            <person name="Ashcroft F.M."/>
            <person name="Ashcroft S.J.H."/>
            <person name="Berggren P.-O."/>
            <person name="Grupe A."/>
            <person name="Pongs O."/>
            <person name="Rorsman P."/>
            <person name="Sandblom J."/>
            <person name="Welsh M."/>
        </authorList>
    </citation>
    <scope>NUCLEOTIDE SEQUENCE [GENOMIC DNA] OF 338-394</scope>
</reference>
<reference key="6">
    <citation type="journal article" date="1993" name="Nature">
        <title>Heteromultimeric K+ channels in terminal and juxtaparanodal regions of neurons.</title>
        <authorList>
            <person name="Wang H."/>
            <person name="Kunkel D.D."/>
            <person name="Martin T.M."/>
            <person name="Schwartzkroin P.A."/>
            <person name="Tempel B.L."/>
        </authorList>
    </citation>
    <scope>SUBUNIT</scope>
    <scope>INTERACTION WITH KCNA1</scope>
    <scope>TISSUE SPECIFICITY</scope>
    <scope>SUBCELLULAR LOCATION</scope>
</reference>
<reference key="7">
    <citation type="journal article" date="1994" name="J. Neurosci.">
        <title>Localization of Kv1.1 and Kv1.2, two K channel proteins, to synaptic terminals, somata, and dendrites in the mouse brain.</title>
        <authorList>
            <person name="Wang H."/>
            <person name="Kunkel D.D."/>
            <person name="Schwartzkroin P.A."/>
            <person name="Tempel B.L."/>
        </authorList>
    </citation>
    <scope>TISSUE SPECIFICITY</scope>
    <scope>SUBCELLULAR LOCATION</scope>
</reference>
<reference key="8">
    <citation type="journal article" date="1998" name="Cell">
        <title>The small GTP-binding protein RhoA regulates a delayed rectifier potassium channel.</title>
        <authorList>
            <person name="Cachero T.G."/>
            <person name="Morielli A.D."/>
            <person name="Peralta E.G."/>
        </authorList>
    </citation>
    <scope>FUNCTION</scope>
    <scope>INTERACTION WITH RHOA</scope>
    <scope>TRANSPORTER ACTIVITY</scope>
</reference>
<reference key="9">
    <citation type="journal article" date="1998" name="J. Neurosci.">
        <title>Heteromultimeric delayed-rectifier K+ channels in Schwann cells: developmental expression and role in cell proliferation.</title>
        <authorList>
            <person name="Sobko A."/>
            <person name="Peretz A."/>
            <person name="Shirihai O."/>
            <person name="Etkin S."/>
            <person name="Cherepanova V."/>
            <person name="Dagan D."/>
            <person name="Attali B."/>
        </authorList>
    </citation>
    <scope>INTERACTION WITH KCNA5</scope>
    <scope>SUBCELLULAR LOCATION</scope>
    <scope>TISSUE SPECIFICITY</scope>
</reference>
<reference key="10">
    <citation type="journal article" date="2003" name="Mol. Pharmacol.">
        <title>Maurotoxin: a potent inhibitor of intermediate conductance Ca2+-activated potassium channels.</title>
        <authorList>
            <person name="Castle N.A."/>
            <person name="London D.O."/>
            <person name="Creech C."/>
            <person name="Fajloun Z."/>
            <person name="Stocker J.W."/>
            <person name="Sabatier J.-M."/>
        </authorList>
    </citation>
    <scope>FUNCTION</scope>
    <scope>SUBCELLULAR LOCATION</scope>
    <scope>ACTIVITY REGULATION</scope>
    <scope>TRANSPORTER ACTIVITY</scope>
</reference>
<reference key="11">
    <citation type="journal article" date="2007" name="BMC Biol.">
        <title>Sleep in Kcna2 knockout mice.</title>
        <authorList>
            <person name="Douglas C.L."/>
            <person name="Vyazovskiy V."/>
            <person name="Southard T."/>
            <person name="Chiu S.-Y."/>
            <person name="Messing A."/>
            <person name="Tononi G."/>
            <person name="Cirelli C."/>
        </authorList>
    </citation>
    <scope>DISRUPTION PHENOTYPE</scope>
    <scope>FUNCTION</scope>
</reference>
<reference key="12">
    <citation type="journal article" date="2007" name="J. Neurophysiol.">
        <title>Seizures and reduced life span in mice lacking the potassium channel subunit Kv1.2, but hypoexcitability and enlarged Kv1 currents in auditory neurons.</title>
        <authorList>
            <person name="Brew H.M."/>
            <person name="Gittelman J.X."/>
            <person name="Silverstein R.S."/>
            <person name="Hanks T.D."/>
            <person name="Demas V.P."/>
            <person name="Robinson L.C."/>
            <person name="Robbins C.A."/>
            <person name="McKee-Johnson J."/>
            <person name="Chiu S.Y."/>
            <person name="Messing A."/>
            <person name="Tempel B.L."/>
        </authorList>
    </citation>
    <scope>DISRUPTION PHENOTYPE</scope>
    <scope>FUNCTION</scope>
    <scope>DEVELOPMENTAL STAGE</scope>
    <scope>TISSUE SPECIFICITY</scope>
</reference>
<reference key="13">
    <citation type="journal article" date="2007" name="Mol. Neurobiol.">
        <title>Ionic channel function in action potential generation: current perspective.</title>
        <authorList>
            <person name="Baranauskas G."/>
        </authorList>
    </citation>
    <scope>REVIEW</scope>
</reference>
<reference key="14">
    <citation type="journal article" date="2008" name="J. Neurosci.">
        <title>Postsynaptic density-93 clusters Kv1 channels at axon initial segments independently of Caspr2.</title>
        <authorList>
            <person name="Ogawa Y."/>
            <person name="Horresh I."/>
            <person name="Trimmer J.S."/>
            <person name="Bredt D.S."/>
            <person name="Peles E."/>
            <person name="Rasband M.N."/>
        </authorList>
    </citation>
    <scope>SUBCELLULAR LOCATION</scope>
</reference>
<reference key="15">
    <citation type="journal article" date="2008" name="J. Proteome Res.">
        <title>Large-scale identification and evolution indexing of tyrosine phosphorylation sites from murine brain.</title>
        <authorList>
            <person name="Ballif B.A."/>
            <person name="Carey G.R."/>
            <person name="Sunyaev S.R."/>
            <person name="Gygi S.P."/>
        </authorList>
    </citation>
    <scope>PHOSPHORYLATION [LARGE SCALE ANALYSIS] AT TYR-429</scope>
    <scope>IDENTIFICATION BY MASS SPECTROMETRY [LARGE SCALE ANALYSIS]</scope>
    <source>
        <tissue>Brain</tissue>
    </source>
</reference>
<reference key="16">
    <citation type="journal article" date="2008" name="Mol. Cell. Neurosci.">
        <title>Impairment of learning and memory in TAG-1 deficient mice associated with shorter CNS internodes and disrupted juxtaparanodes.</title>
        <authorList>
            <person name="Savvaki M."/>
            <person name="Panagiotaropoulos T."/>
            <person name="Stamatakis A."/>
            <person name="Sargiannidou I."/>
            <person name="Karatzioula P."/>
            <person name="Watanabe K."/>
            <person name="Stylianopoulou F."/>
            <person name="Karagogeos D."/>
            <person name="Kleopa K.A."/>
        </authorList>
    </citation>
    <scope>TISSUE SPECIFICITY</scope>
</reference>
<reference key="17">
    <citation type="journal article" date="2010" name="Cell">
        <title>A tissue-specific atlas of mouse protein phosphorylation and expression.</title>
        <authorList>
            <person name="Huttlin E.L."/>
            <person name="Jedrychowski M.P."/>
            <person name="Elias J.E."/>
            <person name="Goswami T."/>
            <person name="Rad R."/>
            <person name="Beausoleil S.A."/>
            <person name="Villen J."/>
            <person name="Haas W."/>
            <person name="Sowa M.E."/>
            <person name="Gygi S.P."/>
        </authorList>
    </citation>
    <scope>PHOSPHORYLATION [LARGE SCALE ANALYSIS] AT SER-434; SER-440 AND SER-468</scope>
    <scope>IDENTIFICATION BY MASS SPECTROMETRY [LARGE SCALE ANALYSIS]</scope>
    <source>
        <tissue>Brain</tissue>
    </source>
</reference>
<reference key="18">
    <citation type="journal article" date="2010" name="J. Biol. Chem.">
        <title>A new Kv1.2 channelopathy underlying cerebellar ataxia.</title>
        <authorList>
            <person name="Xie G."/>
            <person name="Harrison J."/>
            <person name="Clapcote S.J."/>
            <person name="Huang Y."/>
            <person name="Zhang J.Y."/>
            <person name="Wang L.Y."/>
            <person name="Roder J.C."/>
        </authorList>
    </citation>
    <scope>FUNCTION</scope>
    <scope>MUTAGENESIS OF ILE-402</scope>
    <scope>SUBCELLULAR LOCATION</scope>
    <scope>MISCELLANEOUS</scope>
    <scope>TISSUE SPECIFICITY</scope>
    <scope>BIOPHYSICOCHEMICAL PROPERTIES</scope>
    <scope>TRANSPORTER ACTIVITY</scope>
</reference>
<reference key="19">
    <citation type="journal article" date="2011" name="J. Biol. Chem.">
        <title>Contribution of Kv1.2 voltage-gated potassium channel to D2 autoreceptor regulation of axonal dopamine overflow.</title>
        <authorList>
            <person name="Fulton S."/>
            <person name="Thibault D."/>
            <person name="Mendez J.A."/>
            <person name="Lahaie N."/>
            <person name="Tirotta E."/>
            <person name="Borrelli E."/>
            <person name="Bouvier M."/>
            <person name="Tempel B.L."/>
            <person name="Trudeau L.E."/>
        </authorList>
    </citation>
    <scope>FUNCTION</scope>
    <scope>TISSUE SPECIFICITY</scope>
    <scope>SUBCELLULAR LOCATION</scope>
    <scope>INTERACTION WITH DRD2</scope>
    <scope>TRANSPORTER ACTIVITY</scope>
</reference>
<reference key="20">
    <citation type="journal article" date="2012" name="J. Neurosci.">
        <title>Altered distribution of juxtaparanodal kv1.2 subunits mediates peripheral nerve hyperexcitability in type 2 diabetes mellitus.</title>
        <authorList>
            <person name="Zenker J."/>
            <person name="Poirot O."/>
            <person name="de Preux Charles A.S."/>
            <person name="Arnaud E."/>
            <person name="Medard J.J."/>
            <person name="Lacroix C."/>
            <person name="Kuntzer T."/>
            <person name="Chrast R."/>
        </authorList>
    </citation>
    <scope>TISSUE SPECIFICITY</scope>
</reference>
<reference key="21">
    <citation type="journal article" date="2013" name="Cell">
        <title>Dynamic interaction between sigma-1 receptor and Kv1.2 shapes neuronal and behavioral responses to cocaine.</title>
        <authorList>
            <person name="Kourrich S."/>
            <person name="Hayashi T."/>
            <person name="Chuang J.Y."/>
            <person name="Tsai S.Y."/>
            <person name="Su T.P."/>
            <person name="Bonci A."/>
        </authorList>
    </citation>
    <scope>INTERACTION WITH SIGMAR1</scope>
    <scope>SUBCELLULAR LOCATION</scope>
</reference>
<reference key="22">
    <citation type="journal article" date="2013" name="J. Neurophysiol.">
        <title>Association of the Kv1 family of K+ channels and their functional blueprint in the properties of auditory neurons as revealed by genetic and functional analyses.</title>
        <authorList>
            <person name="Wang W."/>
            <person name="Kim H.J."/>
            <person name="Lv P."/>
            <person name="Tempel B."/>
            <person name="Yamoah E.N."/>
        </authorList>
    </citation>
    <scope>DISRUPTION PHENOTYPE</scope>
    <scope>FUNCTION</scope>
    <scope>SUBCELLULAR LOCATION</scope>
    <scope>SUBUNIT</scope>
    <scope>TISSUE SPECIFICITY</scope>
</reference>
<reference key="23">
    <citation type="journal article" date="2013" name="J. Physiol. (Lond.)">
        <title>Activity-dependent downregulation of D-type K+ channel subunit Kv1.2 in rat hippocampal CA3 pyramidal neurons.</title>
        <authorList>
            <person name="Hyun J.H."/>
            <person name="Eom K."/>
            <person name="Lee K.H."/>
            <person name="Ho W.K."/>
            <person name="Lee S.H."/>
        </authorList>
    </citation>
    <scope>FUNCTION</scope>
    <scope>TRANSPORTER ACTIVITY</scope>
</reference>
<reference key="24">
    <citation type="journal article" date="2014" name="J. Neurosci.">
        <title>Caspr and caspr2 are required for both radial and longitudinal organization of myelinated axons.</title>
        <authorList>
            <person name="Gordon A."/>
            <person name="Adamsky K."/>
            <person name="Vainshtein A."/>
            <person name="Frechter S."/>
            <person name="Dupree J.L."/>
            <person name="Rosenbluth J."/>
            <person name="Peles E."/>
        </authorList>
    </citation>
    <scope>SUBCELLULAR LOCATION</scope>
</reference>
<reference key="25">
    <citation type="journal article" date="2015" name="J. Neurosci.">
        <title>Selective Loss of Presynaptic Potassium Channel Clusters at the Cerebellar Basket Cell Terminal Pinceau in Adam11 Mutants Reveals Their Role in Ephaptic Control of Purkinje Cell Firing.</title>
        <authorList>
            <person name="Kole M.J."/>
            <person name="Qian J."/>
            <person name="Waase M.P."/>
            <person name="Klassen T.L."/>
            <person name="Chen T.T."/>
            <person name="Augustine G.J."/>
            <person name="Noebels J.L."/>
        </authorList>
    </citation>
    <scope>INTERACTION WITH ADAM11</scope>
    <scope>SUBCELLULAR LOCATION</scope>
    <scope>TISSUE SPECIFICITY</scope>
</reference>
<name>KCNA2_MOUSE</name>
<keyword id="KW-0002">3D-structure</keyword>
<keyword id="KW-0965">Cell junction</keyword>
<keyword id="KW-1003">Cell membrane</keyword>
<keyword id="KW-0966">Cell projection</keyword>
<keyword id="KW-0256">Endoplasmic reticulum</keyword>
<keyword id="KW-0325">Glycoprotein</keyword>
<keyword id="KW-0407">Ion channel</keyword>
<keyword id="KW-0406">Ion transport</keyword>
<keyword id="KW-0449">Lipoprotein</keyword>
<keyword id="KW-0472">Membrane</keyword>
<keyword id="KW-0564">Palmitate</keyword>
<keyword id="KW-0597">Phosphoprotein</keyword>
<keyword id="KW-0630">Potassium</keyword>
<keyword id="KW-0631">Potassium channel</keyword>
<keyword id="KW-0633">Potassium transport</keyword>
<keyword id="KW-1185">Reference proteome</keyword>
<keyword id="KW-0770">Synapse</keyword>
<keyword id="KW-0771">Synaptosome</keyword>
<keyword id="KW-0812">Transmembrane</keyword>
<keyword id="KW-1133">Transmembrane helix</keyword>
<keyword id="KW-0813">Transport</keyword>
<keyword id="KW-0851">Voltage-gated channel</keyword>
<protein>
    <recommendedName>
        <fullName>Potassium voltage-gated channel subfamily A member 2</fullName>
    </recommendedName>
    <alternativeName>
        <fullName evidence="24">MK2</fullName>
    </alternativeName>
    <alternativeName>
        <fullName>Voltage-gated potassium channel subunit Kv1.2</fullName>
    </alternativeName>
</protein>
<organism>
    <name type="scientific">Mus musculus</name>
    <name type="common">Mouse</name>
    <dbReference type="NCBI Taxonomy" id="10090"/>
    <lineage>
        <taxon>Eukaryota</taxon>
        <taxon>Metazoa</taxon>
        <taxon>Chordata</taxon>
        <taxon>Craniata</taxon>
        <taxon>Vertebrata</taxon>
        <taxon>Euteleostomi</taxon>
        <taxon>Mammalia</taxon>
        <taxon>Eutheria</taxon>
        <taxon>Euarchontoglires</taxon>
        <taxon>Glires</taxon>
        <taxon>Rodentia</taxon>
        <taxon>Myomorpha</taxon>
        <taxon>Muroidea</taxon>
        <taxon>Muridae</taxon>
        <taxon>Murinae</taxon>
        <taxon>Mus</taxon>
        <taxon>Mus</taxon>
    </lineage>
</organism>
<accession>P63141</accession>
<accession>B2RS05</accession>
<accession>P15386</accession>
<accession>Q02010</accession>
<accession>Q8C8W4</accession>
<proteinExistence type="evidence at protein level"/>
<sequence>MTVATGDPVDEAAALPGHPQDTYDPEADHECCERVVINISGLRFETQLKTLAQFPETLLGDPKKRMRYFDPLRNEYFFDRNRPSFDAILYYYQSGGRLRRPVNVPLDIFSEEIRFYELGEEAMEMFREDEGYIKEEERPLPENEFQRQVWLLFEYPESSGPARIIAIVSVMVILISIVSFCLETLPIFRDENEDMHGGGVTFHTYSNSTIGYQQSTSFTDPFFIVETLCIIWFSFEFLVRFFACPSKAGFFTNIMNIIDIVAIIPYFITLGTELAEKPEDAQQGQQAMSLAILRVIRLVRVFRIFKLSRHSKGLQILGQTLKASMRELGLLIFFLFIGVILFSSAVYFAEADERDSQFPSIPDAFWWAVVSMTTVGYGDMVPTTIGGKIVGSLCAIAGVLTIALPVPVIVSNFNYFYHRETEGEEQAQYLQVTSCPKIPSSPDLKKSRSASTISKSDYMEIQEGVNNSNEDFREENLKTANCTLANTNYVNITKMLTDV</sequence>
<feature type="chain" id="PRO_0000053973" description="Potassium voltage-gated channel subfamily A member 2">
    <location>
        <begin position="1"/>
        <end position="499"/>
    </location>
</feature>
<feature type="topological domain" description="Cytoplasmic" evidence="3">
    <location>
        <begin position="1"/>
        <end position="160"/>
    </location>
</feature>
<feature type="transmembrane region" description="Helical; Name=Segment S1" evidence="3">
    <location>
        <begin position="161"/>
        <end position="182"/>
    </location>
</feature>
<feature type="topological domain" description="Extracellular" evidence="3">
    <location>
        <begin position="183"/>
        <end position="221"/>
    </location>
</feature>
<feature type="transmembrane region" description="Helical; Name=Segment S2" evidence="3">
    <location>
        <begin position="222"/>
        <end position="243"/>
    </location>
</feature>
<feature type="topological domain" description="Cytoplasmic" evidence="3">
    <location>
        <begin position="244"/>
        <end position="254"/>
    </location>
</feature>
<feature type="transmembrane region" description="Helical; Name=Segment S3" evidence="3">
    <location>
        <begin position="255"/>
        <end position="275"/>
    </location>
</feature>
<feature type="topological domain" description="Extracellular" evidence="3">
    <location>
        <begin position="276"/>
        <end position="289"/>
    </location>
</feature>
<feature type="transmembrane region" description="Helical; Voltage-sensor; Name=Segment S4" evidence="3">
    <location>
        <begin position="290"/>
        <end position="310"/>
    </location>
</feature>
<feature type="topological domain" description="Cytoplasmic" evidence="3">
    <location>
        <begin position="311"/>
        <end position="325"/>
    </location>
</feature>
<feature type="transmembrane region" description="Helical; Name=Segment S5" evidence="3">
    <location>
        <begin position="326"/>
        <end position="347"/>
    </location>
</feature>
<feature type="topological domain" description="Extracellular" evidence="3">
    <location>
        <begin position="348"/>
        <end position="361"/>
    </location>
</feature>
<feature type="intramembrane region" description="Helical; Name=Pore helix" evidence="3">
    <location>
        <begin position="362"/>
        <end position="373"/>
    </location>
</feature>
<feature type="intramembrane region" evidence="3">
    <location>
        <begin position="374"/>
        <end position="381"/>
    </location>
</feature>
<feature type="topological domain" description="Extracellular" evidence="3">
    <location>
        <begin position="382"/>
        <end position="388"/>
    </location>
</feature>
<feature type="transmembrane region" description="Helical; Name=Segment S6" evidence="3">
    <location>
        <begin position="389"/>
        <end position="417"/>
    </location>
</feature>
<feature type="topological domain" description="Cytoplasmic" evidence="3">
    <location>
        <begin position="418"/>
        <end position="499"/>
    </location>
</feature>
<feature type="region of interest" description="Tetramerization domain" evidence="3">
    <location>
        <begin position="1"/>
        <end position="125"/>
    </location>
</feature>
<feature type="region of interest" description="Disordered" evidence="6">
    <location>
        <begin position="1"/>
        <end position="26"/>
    </location>
</feature>
<feature type="region of interest" description="S4-S5 linker" evidence="3">
    <location>
        <begin position="312"/>
        <end position="325"/>
    </location>
</feature>
<feature type="short sequence motif" description="Selectivity filter" evidence="3">
    <location>
        <begin position="374"/>
        <end position="379"/>
    </location>
</feature>
<feature type="short sequence motif" description="PDZ-binding" evidence="3">
    <location>
        <begin position="497"/>
        <end position="499"/>
    </location>
</feature>
<feature type="site" description="Important for normal, slow channel gating" evidence="3">
    <location>
        <position position="252"/>
    </location>
</feature>
<feature type="site" description="Important for binding with the scorpion mesomartoxin; when the scorpion mesomartoxin-rKv1.2/KCNA2 interaction is modeled, this residue is close to the 'Y-57' residue of the toxin" evidence="3">
    <location>
        <position position="381"/>
    </location>
</feature>
<feature type="modified residue" description="Phosphotyrosine" evidence="29">
    <location>
        <position position="429"/>
    </location>
</feature>
<feature type="modified residue" description="Phosphoserine" evidence="30">
    <location>
        <position position="434"/>
    </location>
</feature>
<feature type="modified residue" description="Phosphoserine" evidence="30">
    <location>
        <position position="440"/>
    </location>
</feature>
<feature type="modified residue" description="Phosphoserine" evidence="4">
    <location>
        <position position="441"/>
    </location>
</feature>
<feature type="modified residue" description="Phosphoserine" evidence="4">
    <location>
        <position position="449"/>
    </location>
</feature>
<feature type="modified residue" description="Phosphotyrosine" evidence="3">
    <location>
        <position position="458"/>
    </location>
</feature>
<feature type="modified residue" description="Phosphoserine" evidence="30">
    <location>
        <position position="468"/>
    </location>
</feature>
<feature type="lipid moiety-binding region" description="S-palmitoyl cysteine" evidence="5">
    <location>
        <position position="244"/>
    </location>
</feature>
<feature type="glycosylation site" description="N-linked (GlcNAc...) asparagine" evidence="5">
    <location>
        <position position="207"/>
    </location>
</feature>
<feature type="mutagenesis site" description="In Pgu; chronic motor incoordination; decreases the number of functional channels at the cell surface." evidence="12">
    <original>I</original>
    <variation>T</variation>
    <location>
        <position position="402"/>
    </location>
</feature>
<feature type="sequence conflict" description="In Ref. 2; BAC31877." evidence="25" ref="2">
    <original>E</original>
    <variation>G</variation>
    <location>
        <position position="33"/>
    </location>
</feature>
<feature type="strand" evidence="31">
    <location>
        <begin position="34"/>
        <end position="39"/>
    </location>
</feature>
<feature type="strand" evidence="31">
    <location>
        <begin position="42"/>
        <end position="47"/>
    </location>
</feature>
<feature type="helix" evidence="31">
    <location>
        <begin position="48"/>
        <end position="51"/>
    </location>
</feature>
<feature type="turn" evidence="31">
    <location>
        <begin position="58"/>
        <end position="60"/>
    </location>
</feature>
<feature type="helix" evidence="31">
    <location>
        <begin position="62"/>
        <end position="65"/>
    </location>
</feature>
<feature type="helix" evidence="31">
    <location>
        <begin position="66"/>
        <end position="68"/>
    </location>
</feature>
<feature type="turn" evidence="31">
    <location>
        <begin position="71"/>
        <end position="74"/>
    </location>
</feature>
<feature type="strand" evidence="31">
    <location>
        <begin position="75"/>
        <end position="78"/>
    </location>
</feature>
<feature type="helix" evidence="31">
    <location>
        <begin position="85"/>
        <end position="94"/>
    </location>
</feature>
<feature type="helix" evidence="31">
    <location>
        <begin position="106"/>
        <end position="115"/>
    </location>
</feature>
<feature type="helix" evidence="31">
    <location>
        <begin position="120"/>
        <end position="129"/>
    </location>
</feature>
<feature type="helix" evidence="31">
    <location>
        <begin position="144"/>
        <end position="154"/>
    </location>
</feature>
<feature type="turn" evidence="31">
    <location>
        <begin position="156"/>
        <end position="158"/>
    </location>
</feature>
<feature type="helix" evidence="31">
    <location>
        <begin position="160"/>
        <end position="182"/>
    </location>
</feature>
<feature type="helix" evidence="31">
    <location>
        <begin position="186"/>
        <end position="189"/>
    </location>
</feature>
<feature type="turn" evidence="31">
    <location>
        <begin position="193"/>
        <end position="196"/>
    </location>
</feature>
<feature type="helix" evidence="31">
    <location>
        <begin position="202"/>
        <end position="206"/>
    </location>
</feature>
<feature type="helix" evidence="31">
    <location>
        <begin position="208"/>
        <end position="210"/>
    </location>
</feature>
<feature type="helix" evidence="31">
    <location>
        <begin position="221"/>
        <end position="243"/>
    </location>
</feature>
<feature type="strand" evidence="31">
    <location>
        <begin position="247"/>
        <end position="249"/>
    </location>
</feature>
<feature type="turn" evidence="31">
    <location>
        <begin position="250"/>
        <end position="252"/>
    </location>
</feature>
<feature type="helix" evidence="31">
    <location>
        <begin position="254"/>
        <end position="261"/>
    </location>
</feature>
<feature type="helix" evidence="31">
    <location>
        <begin position="283"/>
        <end position="287"/>
    </location>
</feature>
<feature type="helix" evidence="31">
    <location>
        <begin position="290"/>
        <end position="299"/>
    </location>
</feature>
<feature type="helix" evidence="31">
    <location>
        <begin position="300"/>
        <end position="309"/>
    </location>
</feature>
<feature type="helix" evidence="31">
    <location>
        <begin position="312"/>
        <end position="351"/>
    </location>
</feature>
<feature type="turn" evidence="31">
    <location>
        <begin position="361"/>
        <end position="364"/>
    </location>
</feature>
<feature type="helix" evidence="31">
    <location>
        <begin position="365"/>
        <end position="372"/>
    </location>
</feature>
<feature type="strand" evidence="31">
    <location>
        <begin position="378"/>
        <end position="380"/>
    </location>
</feature>
<feature type="helix" evidence="31">
    <location>
        <begin position="385"/>
        <end position="403"/>
    </location>
</feature>
<feature type="helix" evidence="31">
    <location>
        <begin position="405"/>
        <end position="418"/>
    </location>
</feature>
<comment type="function">
    <text evidence="1 7 8 9 12 13 16 17 22 25">Voltage-gated potassium channel that mediates transmembrane potassium transport in excitable membranes, primarily in the brain and the central nervous system, but also in the cardiovascular system. Prevents aberrant action potential firing and regulates neuronal output. Forms tetrameric potassium-selective channels through which potassium ions pass in accordance with their electrochemical gradient. The channel alternates between opened and closed conformations in response to the voltage difference across the membrane (PubMed:12527813, PubMed:21233214). Can form functional homotetrameric channels and heterotetrameric channels that contain variable proportions of KCNA1, KCNA2, KCNA4, KCNA5, KCNA6, KCNA7, and possibly other family members as well; channel properties depend on the type of alpha subunits that are part of the channel (PubMed:20696761). Channel properties are modulated by cytoplasmic beta subunits that regulate the subcellular location of the alpha subunits and promote rapid inactivation of delayed rectifier potassium channels (By similarity). In vivo, membranes probably contain a mixture of heteromeric potassium channel complexes, making it difficult to assign currents observed in intact tissues to any particular potassium channel family member. Homotetrameric KCNA2 forms a delayed-rectifier potassium channel that opens in response to membrane depolarization, followed by slow spontaneous channel closure (PubMed:23864368). In contrast, a heteromultimer formed by KCNA2 and KCNA4 shows rapid inactivation (PubMed:23864368). Contributes to the regulation of action potentials in neurons (PubMed:12527813, PubMed:17925011). KCNA2-containing channels play a presynaptic role and prevent hyperexcitability and aberrant action potential firing (PubMed:17634333, PubMed:17925011). Response to toxins that are selective for KCNA1, respectively for KCNA2, suggests that heteromeric potassium channels composed of both KCNA1 and KCNA2 play a role in pacemaking and regulate the output of deep cerebellar nuclear neurons (By similarity). Response to toxins that are selective for KCNA2-containing potassium channels suggests that in Purkinje cells, dendritic subthreshold KCNA2-containing potassium channels prevent random spontaneous calcium spikes, suppressing dendritic hyperexcitability without hindering the generation of somatic action potentials, and thereby play an important role in motor coordination (By similarity). KCNA2-containing channels play a role in GABAergic transmission from basket cells to Purkinje cells in the cerebellum, and thereby play an import role in motor coordination (PubMed:20696761). Plays a role in the induction of long-term potentiation of neuron excitability in the CA3 layer of the hippocampus (PubMed:23981714). May function as down-stream effector for G protein-coupled receptors and inhibit GABAergic inputs to basolateral amygdala neurons (By similarity). May contribute to the regulation of neurotransmitter release, such as gamma-aminobutyric acid (GABA) (By similarity). Contributes to the regulation of the axonal release of the neurotransmitter dopamine (PubMed:21233214). Reduced KCNA2 expression plays a role in the perception of neuropathic pain after peripheral nerve injury, but not acute pain (By similarity). Plays a role in the regulation of the time spent in non-rapid eye movement (NREM) sleep (PubMed:17925011).</text>
</comment>
<comment type="catalytic activity">
    <reaction evidence="7 12 13 16 17 22">
        <text>K(+)(in) = K(+)(out)</text>
        <dbReference type="Rhea" id="RHEA:29463"/>
        <dbReference type="ChEBI" id="CHEBI:29103"/>
    </reaction>
</comment>
<comment type="activity regulation">
    <text evidence="2 3 7">Inhibited by 4-aminopyridine (4-AP), dendrotoxin (DTX) and charybdotoxin (CTX), but not by tetraethylammonium (TEA) (By similarity). Inhibited by tityustoxin-K alpha (TsTX-Kalpha), a toxin that is highly specific for KCNA2 (By similarity). Inhibited by maurotoxin (PubMed:12527813). Inhibited by kappaM conotoxins kappaM-RIIIJ and kappaM-RIIIK (By similarity).</text>
</comment>
<comment type="biophysicochemical properties">
    <kinetics>
        <text evidence="12">Homotetrameric channels activate rapidly, i.e within a few msec, but inactivation is very slow, with only a marginal decrease in conductance over several seconds. The voltage-dependence of activation and inactivation and other channel characteristics vary depending on the experimental conditions, the expression system, post-translational modifications and the presence or absence of ancillary subunits. For the activation of homotetrameric channels expressed in Chinese hamster ovary (CHO) cells, the voltage at half-maximal amplitude is about -37 mV.</text>
    </kinetics>
</comment>
<comment type="subunit">
    <text evidence="2 3 4 8 13 15 19 21 22 23 25 27">Homotetramer and heterotetramer with other channel-forming alpha subunits, such as KCNA1, KCNA4, KCNA5, KCNA6 and KCNA7 (PubMed:23864368, PubMed:8361541, PubMed:9852577). Channel activity is regulated by interaction with beta subunits, including KCNAB1 and KCNAB2 (By similarity). Identified in a complex with KCNA1 and KCNAB2 (By similarity). Identified in a complex with KCNA5 and KCNAB1 (By similarity). Identified in a complex with KCNA4 and FYN (By similarity). Interacts with PTK2B (By similarity). Interacts (via C-terminus) with CTTN (By similarity). Interacts with ADAM22 (By similarity). Interacts with CNTNAP2 (By similarity). Interacts (via C-terminus) with the PDZ domains of DLG1, DLG2 and DLG4 (By similarity). Interacts (via N-terminal cytoplasmic domain) with RHOA (GTP-bound form); this regulates channel activity by reducing location at the cell surface in response to CHRM1 activation (PubMed:9635436). Interacts with DRD2 (PubMed:21233214). Interacts with SIGMAR1; cocaine consumption leads to increased interaction (PubMed:23332758). Interacts with ADAM11 (PubMed:26269648). Interacts with LYNX1 (By similarity).</text>
</comment>
<comment type="interaction">
    <interactant intactId="EBI-644033">
        <id>P63141</id>
    </interactant>
    <interactant intactId="EBI-397955">
        <id>Q60598</id>
        <label>Cttn</label>
    </interactant>
    <organismsDiffer>false</organismsDiffer>
    <experiments>3</experiments>
</comment>
<comment type="interaction">
    <interactant intactId="EBI-644033">
        <id>P63141</id>
    </interactant>
    <interactant intactId="EBI-1557700">
        <id>O55242</id>
        <label>Sigmar1</label>
    </interactant>
    <organismsDiffer>false</organismsDiffer>
    <experiments>3</experiments>
</comment>
<comment type="interaction">
    <interactant intactId="EBI-644033">
        <id>P63141</id>
    </interactant>
    <interactant intactId="EBI-1557826">
        <id>Q9R0C9</id>
        <label>Sigmar1</label>
    </interactant>
    <organismsDiffer>true</organismsDiffer>
    <experiments>3</experiments>
</comment>
<comment type="subcellular location">
    <subcellularLocation>
        <location evidence="7 10 12 15 16">Cell membrane</location>
        <topology evidence="3">Multi-pass membrane protein</topology>
    </subcellularLocation>
    <subcellularLocation>
        <location evidence="15 21 23">Membrane</location>
    </subcellularLocation>
    <subcellularLocation>
        <location evidence="10 13 19 20 21">Cell projection</location>
        <location evidence="10 13 19 20 21">Axon</location>
    </subcellularLocation>
    <subcellularLocation>
        <location evidence="3">Synapse</location>
    </subcellularLocation>
    <subcellularLocation>
        <location evidence="3">Endoplasmic reticulum membrane</location>
    </subcellularLocation>
    <subcellularLocation>
        <location evidence="3">Cell projection</location>
        <location evidence="3">Lamellipodium membrane</location>
    </subcellularLocation>
    <subcellularLocation>
        <location evidence="13">Synapse</location>
        <location evidence="13">Synaptosome</location>
    </subcellularLocation>
    <subcellularLocation>
        <location evidence="13">Presynaptic cell membrane</location>
    </subcellularLocation>
    <subcellularLocation>
        <location evidence="20">Cell projection</location>
        <location evidence="20">Dendrite</location>
    </subcellularLocation>
    <subcellularLocation>
        <location evidence="19 20">Perikaryon</location>
    </subcellularLocation>
    <subcellularLocation>
        <location evidence="18">Cell junction</location>
        <location evidence="18">Paranodal septate junction</location>
    </subcellularLocation>
    <text evidence="3 15 18">KCNA2 by itself is detected both at the endoplasmic reticulum and at the cell membrane. Coexpression with KCNA4 or with beta subunits promotes expression at the cell membrane. Coexpression with KCNA1 inhibits cell surface expression (By similarity). Cocaine-induced interaction with SIGMAR1 increases expression at the cell surface (PubMed:23332758). In myelinated peripheral axons, clustered in the juxtaparadonal region and at an internodal line located along the mesaxon and below the Schmidt-Lanterman incisures (PubMed:25378149).</text>
</comment>
<comment type="tissue specificity">
    <text evidence="8 11 12 14 16 19 20 21 23">Detected in brain (PubMed:17634333). Detected in cerebellum (PubMed:20696761). Detected in mitral cells in the olfactory bulb (PubMed:8046438). Detected in cochlea (PubMed:23864368). Detected in cerebellum, particularly in the basket cell axon plexus and in the terminal regions around Purkinje cells (at protein level) (PubMed:18760366, PubMed:26269648, PubMed:8046438, PubMed:8361541). Detected in juxtaparanodal regions in sciatic nerve (PubMed:22649228). Detected in Schwann cells from sciatic nerve (PubMed:9852577). Detected in dopamine neurons in substantia nigra (PubMed:21233214). Detected in large myelinated fibers in juxtaparanodes in the CA3 and CA1 areas of the hippocampus (PubMed:18760366, PubMed:8046438). Detected in brain, in punctae on fiber tracts in brain stem and spinal cord, and on axons in the juxtaparanodal regions of the node of Ranvier (at protein level) (PubMed:8361541). Detected in dopamine neurons in the midbrain (PubMed:21233214).</text>
</comment>
<comment type="developmental stage">
    <text evidence="8">Detected at low levels in brainstem from neonates; increases tenfold during the first 29 days after birth.</text>
</comment>
<comment type="domain">
    <text evidence="3">The cytoplasmic N-terminus is important for tetramerization. Interactions between the different subunits modulate the gating characteristics (By similarity). Besides, the cytoplasmic N-terminal domain mediates interaction with RHOA and thus is required for RHOA-mediated endocytosis (By similarity).</text>
</comment>
<comment type="domain">
    <text evidence="3">The transmembrane segment S4 functions as a voltage-sensor and is characterized by a series of positively charged amino acids at every third position. Channel opening and closing is effected by a conformation change that affects the position and orientation of the voltage-sensor paddle formed by S3 and S4 within the membrane. A transmembrane electric field that is positive inside would push the positively charged S4 segment outwards, thereby opening the pore, while a field that is negative inside would pull the S4 segment inwards and close the pore. Changes in the position and orientation of S4 are then transmitted to the activation gate formed by the inner helix bundle via the S4-S5 linker region.</text>
</comment>
<comment type="PTM">
    <text evidence="3">Phosphorylated on tyrosine residues; phosphorylation increases in response to ischemia (By similarity). Phosphorylated on tyrosine residues by activated PTK2B/PYK2 (By similarity). Phosphorylation on tyrosine residues suppresses ion channel activity (By similarity). Phosphorylated on tyrosine residues in response to CHRM1 activation; this abolishes interaction with CTTN. This is probably due to endocytosis of the phosphorylated channel subunits (By similarity). Phosphorylated on serine residues in response to increased cAMP levels; phosphorylation is apparently not catalyzed by PKA (By similarity).</text>
</comment>
<comment type="PTM">
    <text evidence="3">N-glycosylated, with complex, sialylated N-glycans.</text>
</comment>
<comment type="disruption phenotype">
    <text evidence="8 9 16">Pups are born at the expected Mendelian rate and appear normal during the first 14 days after birth. Starting at 14 to 17 days after birth, mice exhibit susceptibility to generalized seizures, followed by full tonic extension, which in mice often results in fatal apne. The average lifespan is 17 days; none survive more than 28 days (PubMed:17634333, PubMed:17925011). At P17 seizures are very rare and abnormal electroencephalograph activity is only present during the seizure. P17 pups have significantly less non-rapid eye movement (NREM) sleep (-23%) and significantly more waking (+21%) than wild-type siblings with no change in rapid eye movement (REM) sleep time. The decrease in NREM sleep is due to an increase in the number of waking episodes, with no change in number or duration of sleep episodes (PubMed:17925011). Auditory neurons from the medial nucleus of the trapezoid body in brain stem are hypoexcitable and fire fewer action potentials than wild-type neurons with significantly smaller threshold current amplitudes (PubMed:17634333). In the inner ear, spiral ganglion neurons display a hyperpolarized resting membrane potential, increased excitability and increased outward potassium currents; this might be because normally channels there are heterotetramers formed by KCNA2 and KCNA4, so the loss of KCNA2 changes channel characteristics (PubMed:23864368).</text>
</comment>
<comment type="miscellaneous">
    <text evidence="12">Mutagenesis with N-ethyl-N-nitrosourea (ENU) lead to the discovery of the Pingu (Pgu) phenotype. At P21, heterozygous mice are clearly smaller than wild-type and have abnormal gait with a higher stance and splayed hind limbs. Homozygous mice are even smaller, and about half of them die between P15 and P35. Mutant mice have difficulty staing on a rotating rod and perform poorly in a beam-walking test, where they display flattened posture, severe tremors, myoclonic jerks and ataxic movement. These symptoms are alleviated by a drug used to treat cerebellar ataxia. Measurements with Purkinje cells from cerebellar brain slices show increased frequency and amplitude of spontaneous inhibitory postsynaptic currents.</text>
</comment>
<comment type="miscellaneous">
    <text evidence="26">The delay or D-type current observed in hippocampus pyramidal neurons is probably mediated by potassium channels containing KCNA2 plus KCNA1 or other family members. It is activated at about -50 mV, i.e. below the action potential threshold, and is characterized by slow inactivation, extremely slow recovery from inactivation, sensitivity to dendrotoxin (DTX) and to 4-aminopyridine (4-AP).</text>
</comment>
<comment type="similarity">
    <text evidence="25">Belongs to the potassium channel family. A (Shaker) (TC 1.A.1.2) subfamily. Kv1.2/KCNA2 sub-subfamily.</text>
</comment>
<dbReference type="EMBL" id="M30440">
    <property type="protein sequence ID" value="AAA39713.1"/>
    <property type="molecule type" value="Genomic_DNA"/>
</dbReference>
<dbReference type="EMBL" id="AK044342">
    <property type="protein sequence ID" value="BAC31877.1"/>
    <property type="molecule type" value="mRNA"/>
</dbReference>
<dbReference type="EMBL" id="CH466607">
    <property type="protein sequence ID" value="EDL01892.1"/>
    <property type="molecule type" value="Genomic_DNA"/>
</dbReference>
<dbReference type="EMBL" id="BC138650">
    <property type="protein sequence ID" value="AAI38651.1"/>
    <property type="molecule type" value="mRNA"/>
</dbReference>
<dbReference type="EMBL" id="BC138651">
    <property type="protein sequence ID" value="AAI38652.1"/>
    <property type="molecule type" value="mRNA"/>
</dbReference>
<dbReference type="CCDS" id="CCDS17733.1"/>
<dbReference type="PIR" id="B40090">
    <property type="entry name" value="I84204"/>
</dbReference>
<dbReference type="RefSeq" id="NP_032443.3">
    <property type="nucleotide sequence ID" value="NM_008417.5"/>
</dbReference>
<dbReference type="RefSeq" id="XP_006501111.1">
    <property type="nucleotide sequence ID" value="XM_006501048.3"/>
</dbReference>
<dbReference type="RefSeq" id="XP_006501112.1">
    <property type="nucleotide sequence ID" value="XM_006501049.5"/>
</dbReference>
<dbReference type="RefSeq" id="XP_006501113.1">
    <property type="nucleotide sequence ID" value="XM_006501050.4"/>
</dbReference>
<dbReference type="RefSeq" id="XP_006501114.1">
    <property type="nucleotide sequence ID" value="XM_006501051.5"/>
</dbReference>
<dbReference type="RefSeq" id="XP_006501115.1">
    <property type="nucleotide sequence ID" value="XM_006501052.5"/>
</dbReference>
<dbReference type="RefSeq" id="XP_006501116.1">
    <property type="nucleotide sequence ID" value="XM_006501053.5"/>
</dbReference>
<dbReference type="RefSeq" id="XP_006501117.1">
    <property type="nucleotide sequence ID" value="XM_006501054.3"/>
</dbReference>
<dbReference type="RefSeq" id="XP_006501118.1">
    <property type="nucleotide sequence ID" value="XM_006501055.5"/>
</dbReference>
<dbReference type="RefSeq" id="XP_036018799.1">
    <property type="nucleotide sequence ID" value="XM_036162906.1"/>
</dbReference>
<dbReference type="PDB" id="5WIE">
    <property type="method" value="X-ray"/>
    <property type="resolution" value="3.30 A"/>
    <property type="chains" value="B/H=266-279"/>
</dbReference>
<dbReference type="PDBsum" id="5WIE"/>
<dbReference type="SMR" id="P63141"/>
<dbReference type="BioGRID" id="200877">
    <property type="interactions" value="7"/>
</dbReference>
<dbReference type="DIP" id="DIP-32239N"/>
<dbReference type="FunCoup" id="P63141">
    <property type="interactions" value="309"/>
</dbReference>
<dbReference type="IntAct" id="P63141">
    <property type="interactions" value="7"/>
</dbReference>
<dbReference type="STRING" id="10090.ENSMUSP00000041702"/>
<dbReference type="GlyCosmos" id="P63141">
    <property type="glycosylation" value="1 site, No reported glycans"/>
</dbReference>
<dbReference type="GlyGen" id="P63141">
    <property type="glycosylation" value="4 sites, 2 N-linked glycans (2 sites), 1 O-linked glycan (1 site)"/>
</dbReference>
<dbReference type="iPTMnet" id="P63141"/>
<dbReference type="PhosphoSitePlus" id="P63141"/>
<dbReference type="SwissPalm" id="P63141"/>
<dbReference type="PaxDb" id="10090-ENSMUSP00000041702"/>
<dbReference type="PeptideAtlas" id="P63141"/>
<dbReference type="ProteomicsDB" id="263395"/>
<dbReference type="ABCD" id="P63141">
    <property type="antibodies" value="3 sequenced antibodies"/>
</dbReference>
<dbReference type="Antibodypedia" id="4539">
    <property type="antibodies" value="295 antibodies from 31 providers"/>
</dbReference>
<dbReference type="DNASU" id="16490"/>
<dbReference type="Ensembl" id="ENSMUST00000038695.6">
    <property type="protein sequence ID" value="ENSMUSP00000041702.2"/>
    <property type="gene ID" value="ENSMUSG00000040724.6"/>
</dbReference>
<dbReference type="Ensembl" id="ENSMUST00000196403.2">
    <property type="protein sequence ID" value="ENSMUSP00000142873.2"/>
    <property type="gene ID" value="ENSMUSG00000040724.6"/>
</dbReference>
<dbReference type="Ensembl" id="ENSMUST00000197470.5">
    <property type="protein sequence ID" value="ENSMUSP00000143798.2"/>
    <property type="gene ID" value="ENSMUSG00000040724.6"/>
</dbReference>
<dbReference type="GeneID" id="16490"/>
<dbReference type="KEGG" id="mmu:16490"/>
<dbReference type="UCSC" id="uc008qws.2">
    <property type="organism name" value="mouse"/>
</dbReference>
<dbReference type="AGR" id="MGI:96659"/>
<dbReference type="CTD" id="3737"/>
<dbReference type="MGI" id="MGI:96659">
    <property type="gene designation" value="Kcna2"/>
</dbReference>
<dbReference type="VEuPathDB" id="HostDB:ENSMUSG00000040724"/>
<dbReference type="eggNOG" id="KOG1545">
    <property type="taxonomic scope" value="Eukaryota"/>
</dbReference>
<dbReference type="GeneTree" id="ENSGT00940000158688"/>
<dbReference type="InParanoid" id="P63141"/>
<dbReference type="OMA" id="RNDEDDM"/>
<dbReference type="OrthoDB" id="415460at2759"/>
<dbReference type="PhylomeDB" id="P63141"/>
<dbReference type="TreeFam" id="TF313103"/>
<dbReference type="Reactome" id="R-MMU-1296072">
    <property type="pathway name" value="Voltage gated Potassium channels"/>
</dbReference>
<dbReference type="BioGRID-ORCS" id="16490">
    <property type="hits" value="2 hits in 77 CRISPR screens"/>
</dbReference>
<dbReference type="CD-CODE" id="CE726F99">
    <property type="entry name" value="Postsynaptic density"/>
</dbReference>
<dbReference type="ChiTaRS" id="Kcna2">
    <property type="organism name" value="mouse"/>
</dbReference>
<dbReference type="PRO" id="PR:P63141"/>
<dbReference type="Proteomes" id="UP000000589">
    <property type="component" value="Chromosome 3"/>
</dbReference>
<dbReference type="RNAct" id="P63141">
    <property type="molecule type" value="protein"/>
</dbReference>
<dbReference type="Bgee" id="ENSMUSG00000040724">
    <property type="expression patterns" value="Expressed in lateral geniculate body and 148 other cell types or tissues"/>
</dbReference>
<dbReference type="GO" id="GO:0030424">
    <property type="term" value="C:axon"/>
    <property type="evidence" value="ECO:0000314"/>
    <property type="project" value="UniProtKB"/>
</dbReference>
<dbReference type="GO" id="GO:0043194">
    <property type="term" value="C:axon initial segment"/>
    <property type="evidence" value="ECO:0000314"/>
    <property type="project" value="MGI"/>
</dbReference>
<dbReference type="GO" id="GO:0043679">
    <property type="term" value="C:axon terminus"/>
    <property type="evidence" value="ECO:0000314"/>
    <property type="project" value="UniProtKB"/>
</dbReference>
<dbReference type="GO" id="GO:0044305">
    <property type="term" value="C:calyx of Held"/>
    <property type="evidence" value="ECO:0007669"/>
    <property type="project" value="Ensembl"/>
</dbReference>
<dbReference type="GO" id="GO:0030425">
    <property type="term" value="C:dendrite"/>
    <property type="evidence" value="ECO:0000314"/>
    <property type="project" value="UniProtKB"/>
</dbReference>
<dbReference type="GO" id="GO:0005789">
    <property type="term" value="C:endoplasmic reticulum membrane"/>
    <property type="evidence" value="ECO:0007669"/>
    <property type="project" value="UniProtKB-SubCell"/>
</dbReference>
<dbReference type="GO" id="GO:0098978">
    <property type="term" value="C:glutamatergic synapse"/>
    <property type="evidence" value="ECO:0007669"/>
    <property type="project" value="Ensembl"/>
</dbReference>
<dbReference type="GO" id="GO:0044224">
    <property type="term" value="C:juxtaparanode region of axon"/>
    <property type="evidence" value="ECO:0000314"/>
    <property type="project" value="UniProtKB"/>
</dbReference>
<dbReference type="GO" id="GO:0030027">
    <property type="term" value="C:lamellipodium"/>
    <property type="evidence" value="ECO:0000250"/>
    <property type="project" value="UniProtKB"/>
</dbReference>
<dbReference type="GO" id="GO:0031258">
    <property type="term" value="C:lamellipodium membrane"/>
    <property type="evidence" value="ECO:0007669"/>
    <property type="project" value="UniProtKB-SubCell"/>
</dbReference>
<dbReference type="GO" id="GO:0032809">
    <property type="term" value="C:neuronal cell body membrane"/>
    <property type="evidence" value="ECO:0000314"/>
    <property type="project" value="UniProtKB"/>
</dbReference>
<dbReference type="GO" id="GO:0033010">
    <property type="term" value="C:paranodal junction"/>
    <property type="evidence" value="ECO:0007669"/>
    <property type="project" value="UniProtKB-SubCell"/>
</dbReference>
<dbReference type="GO" id="GO:0043204">
    <property type="term" value="C:perikaryon"/>
    <property type="evidence" value="ECO:0000314"/>
    <property type="project" value="UniProtKB"/>
</dbReference>
<dbReference type="GO" id="GO:0005886">
    <property type="term" value="C:plasma membrane"/>
    <property type="evidence" value="ECO:0000315"/>
    <property type="project" value="UniProtKB"/>
</dbReference>
<dbReference type="GO" id="GO:0045211">
    <property type="term" value="C:postsynaptic membrane"/>
    <property type="evidence" value="ECO:0007669"/>
    <property type="project" value="Ensembl"/>
</dbReference>
<dbReference type="GO" id="GO:0042734">
    <property type="term" value="C:presynaptic membrane"/>
    <property type="evidence" value="ECO:0007669"/>
    <property type="project" value="UniProtKB-SubCell"/>
</dbReference>
<dbReference type="GO" id="GO:0008076">
    <property type="term" value="C:voltage-gated potassium channel complex"/>
    <property type="evidence" value="ECO:0000314"/>
    <property type="project" value="BHF-UCL"/>
</dbReference>
<dbReference type="GO" id="GO:0005251">
    <property type="term" value="F:delayed rectifier potassium channel activity"/>
    <property type="evidence" value="ECO:0000250"/>
    <property type="project" value="UniProtKB"/>
</dbReference>
<dbReference type="GO" id="GO:0019894">
    <property type="term" value="F:kinesin binding"/>
    <property type="evidence" value="ECO:0007669"/>
    <property type="project" value="Ensembl"/>
</dbReference>
<dbReference type="GO" id="GO:0015271">
    <property type="term" value="F:outward rectifier potassium channel activity"/>
    <property type="evidence" value="ECO:0007669"/>
    <property type="project" value="Ensembl"/>
</dbReference>
<dbReference type="GO" id="GO:1905030">
    <property type="term" value="F:voltage-gated monoatomic ion channel activity involved in regulation of postsynaptic membrane potential"/>
    <property type="evidence" value="ECO:0007669"/>
    <property type="project" value="Ensembl"/>
</dbReference>
<dbReference type="GO" id="GO:0099508">
    <property type="term" value="F:voltage-gated monoatomic ion channel activity involved in regulation of presynaptic membrane potential"/>
    <property type="evidence" value="ECO:0007669"/>
    <property type="project" value="Ensembl"/>
</dbReference>
<dbReference type="GO" id="GO:0005249">
    <property type="term" value="F:voltage-gated potassium channel activity"/>
    <property type="evidence" value="ECO:0000314"/>
    <property type="project" value="UniProtKB"/>
</dbReference>
<dbReference type="GO" id="GO:0021987">
    <property type="term" value="P:cerebral cortex development"/>
    <property type="evidence" value="ECO:0007669"/>
    <property type="project" value="Ensembl"/>
</dbReference>
<dbReference type="GO" id="GO:0022038">
    <property type="term" value="P:corpus callosum development"/>
    <property type="evidence" value="ECO:0007669"/>
    <property type="project" value="Ensembl"/>
</dbReference>
<dbReference type="GO" id="GO:0019228">
    <property type="term" value="P:neuronal action potential"/>
    <property type="evidence" value="ECO:0000250"/>
    <property type="project" value="UniProtKB"/>
</dbReference>
<dbReference type="GO" id="GO:0021633">
    <property type="term" value="P:optic nerve structural organization"/>
    <property type="evidence" value="ECO:0000315"/>
    <property type="project" value="MGI"/>
</dbReference>
<dbReference type="GO" id="GO:0097623">
    <property type="term" value="P:potassium ion export across plasma membrane"/>
    <property type="evidence" value="ECO:0007669"/>
    <property type="project" value="Ensembl"/>
</dbReference>
<dbReference type="GO" id="GO:0071805">
    <property type="term" value="P:potassium ion transmembrane transport"/>
    <property type="evidence" value="ECO:0000314"/>
    <property type="project" value="UniProtKB"/>
</dbReference>
<dbReference type="GO" id="GO:0051260">
    <property type="term" value="P:protein homooligomerization"/>
    <property type="evidence" value="ECO:0007669"/>
    <property type="project" value="InterPro"/>
</dbReference>
<dbReference type="GO" id="GO:0045188">
    <property type="term" value="P:regulation of circadian sleep/wake cycle, non-REM sleep"/>
    <property type="evidence" value="ECO:0000315"/>
    <property type="project" value="UniProtKB"/>
</dbReference>
<dbReference type="GO" id="GO:0014059">
    <property type="term" value="P:regulation of dopamine secretion"/>
    <property type="evidence" value="ECO:0000315"/>
    <property type="project" value="UniProtKB"/>
</dbReference>
<dbReference type="GO" id="GO:0019233">
    <property type="term" value="P:sensory perception of pain"/>
    <property type="evidence" value="ECO:0000250"/>
    <property type="project" value="UniProtKB"/>
</dbReference>
<dbReference type="FunFam" id="1.10.287.70:FF:000002">
    <property type="entry name" value="Potassium voltage-gated channel subfamily a member"/>
    <property type="match status" value="1"/>
</dbReference>
<dbReference type="FunFam" id="1.20.120.350:FF:000025">
    <property type="entry name" value="Potassium voltage-gated channel subfamily A member 2"/>
    <property type="match status" value="1"/>
</dbReference>
<dbReference type="FunFam" id="3.30.710.10:FF:000007">
    <property type="entry name" value="Potassium voltage-gated channel subfamily A member 2"/>
    <property type="match status" value="1"/>
</dbReference>
<dbReference type="Gene3D" id="1.10.287.70">
    <property type="match status" value="1"/>
</dbReference>
<dbReference type="Gene3D" id="3.30.710.10">
    <property type="entry name" value="Potassium Channel Kv1.1, Chain A"/>
    <property type="match status" value="1"/>
</dbReference>
<dbReference type="Gene3D" id="1.20.120.350">
    <property type="entry name" value="Voltage-gated potassium channels. Chain C"/>
    <property type="match status" value="1"/>
</dbReference>
<dbReference type="InterPro" id="IPR000210">
    <property type="entry name" value="BTB/POZ_dom"/>
</dbReference>
<dbReference type="InterPro" id="IPR005821">
    <property type="entry name" value="Ion_trans_dom"/>
</dbReference>
<dbReference type="InterPro" id="IPR003968">
    <property type="entry name" value="K_chnl_volt-dep_Kv"/>
</dbReference>
<dbReference type="InterPro" id="IPR003972">
    <property type="entry name" value="K_chnl_volt-dep_Kv1"/>
</dbReference>
<dbReference type="InterPro" id="IPR004049">
    <property type="entry name" value="K_chnl_volt-dep_Kv1.2"/>
</dbReference>
<dbReference type="InterPro" id="IPR011333">
    <property type="entry name" value="SKP1/BTB/POZ_sf"/>
</dbReference>
<dbReference type="InterPro" id="IPR003131">
    <property type="entry name" value="T1-type_BTB"/>
</dbReference>
<dbReference type="InterPro" id="IPR028325">
    <property type="entry name" value="VG_K_chnl"/>
</dbReference>
<dbReference type="InterPro" id="IPR027359">
    <property type="entry name" value="Volt_channel_dom_sf"/>
</dbReference>
<dbReference type="PANTHER" id="PTHR11537:SF23">
    <property type="entry name" value="POTASSIUM VOLTAGE-GATED CHANNEL SUBFAMILY A MEMBER 2"/>
    <property type="match status" value="1"/>
</dbReference>
<dbReference type="PANTHER" id="PTHR11537">
    <property type="entry name" value="VOLTAGE-GATED POTASSIUM CHANNEL"/>
    <property type="match status" value="1"/>
</dbReference>
<dbReference type="Pfam" id="PF02214">
    <property type="entry name" value="BTB_2"/>
    <property type="match status" value="1"/>
</dbReference>
<dbReference type="Pfam" id="PF00520">
    <property type="entry name" value="Ion_trans"/>
    <property type="match status" value="1"/>
</dbReference>
<dbReference type="PRINTS" id="PR00169">
    <property type="entry name" value="KCHANNEL"/>
</dbReference>
<dbReference type="PRINTS" id="PR01509">
    <property type="entry name" value="KV12CHANNEL"/>
</dbReference>
<dbReference type="PRINTS" id="PR01491">
    <property type="entry name" value="KVCHANNEL"/>
</dbReference>
<dbReference type="PRINTS" id="PR01496">
    <property type="entry name" value="SHAKERCHANEL"/>
</dbReference>
<dbReference type="SMART" id="SM00225">
    <property type="entry name" value="BTB"/>
    <property type="match status" value="1"/>
</dbReference>
<dbReference type="SUPFAM" id="SSF54695">
    <property type="entry name" value="POZ domain"/>
    <property type="match status" value="1"/>
</dbReference>
<dbReference type="SUPFAM" id="SSF81324">
    <property type="entry name" value="Voltage-gated potassium channels"/>
    <property type="match status" value="1"/>
</dbReference>